<dbReference type="EMBL" id="AK032452">
    <property type="protein sequence ID" value="BAC27875.1"/>
    <property type="status" value="ALT_INIT"/>
    <property type="molecule type" value="mRNA"/>
</dbReference>
<dbReference type="EMBL" id="AK054038">
    <property type="protein sequence ID" value="BAC35629.2"/>
    <property type="molecule type" value="mRNA"/>
</dbReference>
<dbReference type="EMBL" id="AK220332">
    <property type="protein sequence ID" value="BAD90400.1"/>
    <property type="status" value="ALT_INIT"/>
    <property type="molecule type" value="mRNA"/>
</dbReference>
<dbReference type="EMBL" id="BC006842">
    <property type="protein sequence ID" value="AAH06842.1"/>
    <property type="molecule type" value="mRNA"/>
</dbReference>
<dbReference type="EMBL" id="BC047430">
    <property type="protein sequence ID" value="AAH47430.1"/>
    <property type="molecule type" value="mRNA"/>
</dbReference>
<dbReference type="EMBL" id="BC059212">
    <property type="protein sequence ID" value="AAH59212.1"/>
    <property type="status" value="ALT_INIT"/>
    <property type="molecule type" value="mRNA"/>
</dbReference>
<dbReference type="EMBL" id="BC066074">
    <property type="protein sequence ID" value="AAH66074.1"/>
    <property type="status" value="ALT_INIT"/>
    <property type="molecule type" value="mRNA"/>
</dbReference>
<dbReference type="CCDS" id="CCDS40240.1">
    <molecule id="Q8C033-1"/>
</dbReference>
<dbReference type="CCDS" id="CCDS40241.1">
    <molecule id="Q8C033-2"/>
</dbReference>
<dbReference type="RefSeq" id="NP_001032825.1">
    <molecule id="Q8C033-2"/>
    <property type="nucleotide sequence ID" value="NM_001037736.2"/>
</dbReference>
<dbReference type="RefSeq" id="NP_766339.2">
    <molecule id="Q8C033-1"/>
    <property type="nucleotide sequence ID" value="NM_172751.3"/>
</dbReference>
<dbReference type="RefSeq" id="XP_036009784.1">
    <molecule id="Q8C033-1"/>
    <property type="nucleotide sequence ID" value="XM_036153891.1"/>
</dbReference>
<dbReference type="SMR" id="Q8C033"/>
<dbReference type="BioGRID" id="231493">
    <property type="interactions" value="10"/>
</dbReference>
<dbReference type="FunCoup" id="Q8C033">
    <property type="interactions" value="283"/>
</dbReference>
<dbReference type="STRING" id="10090.ENSMUSP00000081225"/>
<dbReference type="GlyGen" id="Q8C033">
    <property type="glycosylation" value="4 sites, 3 N-linked glycans (3 sites), 1 O-linked glycan (1 site)"/>
</dbReference>
<dbReference type="iPTMnet" id="Q8C033"/>
<dbReference type="PhosphoSitePlus" id="Q8C033"/>
<dbReference type="jPOST" id="Q8C033"/>
<dbReference type="PaxDb" id="10090-ENSMUSP00000081225"/>
<dbReference type="ProteomicsDB" id="277283">
    <molecule id="Q8C033-1"/>
</dbReference>
<dbReference type="ProteomicsDB" id="277284">
    <molecule id="Q8C033-2"/>
</dbReference>
<dbReference type="Pumba" id="Q8C033"/>
<dbReference type="Antibodypedia" id="8026">
    <property type="antibodies" value="167 antibodies from 31 providers"/>
</dbReference>
<dbReference type="DNASU" id="234094"/>
<dbReference type="Ensembl" id="ENSMUST00000084207.12">
    <molecule id="Q8C033-1"/>
    <property type="protein sequence ID" value="ENSMUSP00000081225.6"/>
    <property type="gene ID" value="ENSMUSG00000071176.11"/>
</dbReference>
<dbReference type="Ensembl" id="ENSMUST00000110800.9">
    <molecule id="Q8C033-2"/>
    <property type="protein sequence ID" value="ENSMUSP00000106424.3"/>
    <property type="gene ID" value="ENSMUSG00000071176.11"/>
</dbReference>
<dbReference type="GeneID" id="234094"/>
<dbReference type="KEGG" id="mmu:234094"/>
<dbReference type="UCSC" id="uc009kzg.2">
    <molecule id="Q8C033-1"/>
    <property type="organism name" value="mouse"/>
</dbReference>
<dbReference type="UCSC" id="uc009kzh.2">
    <molecule id="Q8C033-2"/>
    <property type="organism name" value="mouse"/>
</dbReference>
<dbReference type="AGR" id="MGI:2444453"/>
<dbReference type="CTD" id="9639"/>
<dbReference type="MGI" id="MGI:2444453">
    <property type="gene designation" value="Arhgef10"/>
</dbReference>
<dbReference type="VEuPathDB" id="HostDB:ENSMUSG00000071176"/>
<dbReference type="eggNOG" id="KOG3522">
    <property type="taxonomic scope" value="Eukaryota"/>
</dbReference>
<dbReference type="GeneTree" id="ENSGT00940000153798"/>
<dbReference type="InParanoid" id="Q8C033"/>
<dbReference type="OMA" id="NSDSEPX"/>
<dbReference type="OrthoDB" id="28697at2759"/>
<dbReference type="PhylomeDB" id="Q8C033"/>
<dbReference type="TreeFam" id="TF331430"/>
<dbReference type="Reactome" id="R-MMU-193648">
    <property type="pathway name" value="NRAGE signals death through JNK"/>
</dbReference>
<dbReference type="Reactome" id="R-MMU-416482">
    <property type="pathway name" value="G alpha (12/13) signalling events"/>
</dbReference>
<dbReference type="Reactome" id="R-MMU-8980692">
    <property type="pathway name" value="RHOA GTPase cycle"/>
</dbReference>
<dbReference type="Reactome" id="R-MMU-9013026">
    <property type="pathway name" value="RHOB GTPase cycle"/>
</dbReference>
<dbReference type="Reactome" id="R-MMU-9013106">
    <property type="pathway name" value="RHOC GTPase cycle"/>
</dbReference>
<dbReference type="Reactome" id="R-MMU-9013148">
    <property type="pathway name" value="CDC42 GTPase cycle"/>
</dbReference>
<dbReference type="Reactome" id="R-MMU-9013149">
    <property type="pathway name" value="RAC1 GTPase cycle"/>
</dbReference>
<dbReference type="BioGRID-ORCS" id="234094">
    <property type="hits" value="2 hits in 77 CRISPR screens"/>
</dbReference>
<dbReference type="ChiTaRS" id="Arhgef10">
    <property type="organism name" value="mouse"/>
</dbReference>
<dbReference type="PRO" id="PR:Q8C033"/>
<dbReference type="Proteomes" id="UP000000589">
    <property type="component" value="Chromosome 8"/>
</dbReference>
<dbReference type="RNAct" id="Q8C033">
    <property type="molecule type" value="protein"/>
</dbReference>
<dbReference type="Bgee" id="ENSMUSG00000071176">
    <property type="expression patterns" value="Expressed in sciatic nerve and 229 other cell types or tissues"/>
</dbReference>
<dbReference type="ExpressionAtlas" id="Q8C033">
    <property type="expression patterns" value="baseline and differential"/>
</dbReference>
<dbReference type="GO" id="GO:0005813">
    <property type="term" value="C:centrosome"/>
    <property type="evidence" value="ECO:0007669"/>
    <property type="project" value="Ensembl"/>
</dbReference>
<dbReference type="GO" id="GO:0005085">
    <property type="term" value="F:guanyl-nucleotide exchange factor activity"/>
    <property type="evidence" value="ECO:0007669"/>
    <property type="project" value="UniProtKB-KW"/>
</dbReference>
<dbReference type="GO" id="GO:0019894">
    <property type="term" value="F:kinesin binding"/>
    <property type="evidence" value="ECO:0007669"/>
    <property type="project" value="Ensembl"/>
</dbReference>
<dbReference type="GO" id="GO:0051298">
    <property type="term" value="P:centrosome duplication"/>
    <property type="evidence" value="ECO:0007669"/>
    <property type="project" value="Ensembl"/>
</dbReference>
<dbReference type="GO" id="GO:0090307">
    <property type="term" value="P:mitotic spindle assembly"/>
    <property type="evidence" value="ECO:0007669"/>
    <property type="project" value="Ensembl"/>
</dbReference>
<dbReference type="GO" id="GO:0022011">
    <property type="term" value="P:myelination in peripheral nervous system"/>
    <property type="evidence" value="ECO:0007669"/>
    <property type="project" value="Ensembl"/>
</dbReference>
<dbReference type="GO" id="GO:0035025">
    <property type="term" value="P:positive regulation of Rho protein signal transduction"/>
    <property type="evidence" value="ECO:0007669"/>
    <property type="project" value="Ensembl"/>
</dbReference>
<dbReference type="GO" id="GO:0051496">
    <property type="term" value="P:positive regulation of stress fiber assembly"/>
    <property type="evidence" value="ECO:0007669"/>
    <property type="project" value="Ensembl"/>
</dbReference>
<dbReference type="CDD" id="cd00160">
    <property type="entry name" value="RhoGEF"/>
    <property type="match status" value="1"/>
</dbReference>
<dbReference type="FunFam" id="2.130.10.10:FF:000340">
    <property type="entry name" value="Rho guanine nucleotide exchange factor (GEF) 10"/>
    <property type="match status" value="1"/>
</dbReference>
<dbReference type="FunFam" id="1.20.900.10:FF:000003">
    <property type="entry name" value="Rho guanine nucleotide exchange factor 10 like"/>
    <property type="match status" value="1"/>
</dbReference>
<dbReference type="Gene3D" id="1.20.900.10">
    <property type="entry name" value="Dbl homology (DH) domain"/>
    <property type="match status" value="1"/>
</dbReference>
<dbReference type="Gene3D" id="2.130.10.10">
    <property type="entry name" value="YVTN repeat-like/Quinoprotein amine dehydrogenase"/>
    <property type="match status" value="1"/>
</dbReference>
<dbReference type="InterPro" id="IPR039919">
    <property type="entry name" value="ARHGEF10/ARHGEF17"/>
</dbReference>
<dbReference type="InterPro" id="IPR035899">
    <property type="entry name" value="DBL_dom_sf"/>
</dbReference>
<dbReference type="InterPro" id="IPR000219">
    <property type="entry name" value="DH_dom"/>
</dbReference>
<dbReference type="InterPro" id="IPR015943">
    <property type="entry name" value="WD40/YVTN_repeat-like_dom_sf"/>
</dbReference>
<dbReference type="InterPro" id="IPR036322">
    <property type="entry name" value="WD40_repeat_dom_sf"/>
</dbReference>
<dbReference type="PANTHER" id="PTHR12877">
    <property type="entry name" value="RHO GUANINE NUCLEOTIDE EXCHANGE FACTOR"/>
    <property type="match status" value="1"/>
</dbReference>
<dbReference type="PANTHER" id="PTHR12877:SF14">
    <property type="entry name" value="RHO GUANINE NUCLEOTIDE EXCHANGE FACTOR 10"/>
    <property type="match status" value="1"/>
</dbReference>
<dbReference type="Pfam" id="PF19057">
    <property type="entry name" value="PH_19"/>
    <property type="match status" value="1"/>
</dbReference>
<dbReference type="Pfam" id="PF00621">
    <property type="entry name" value="RhoGEF"/>
    <property type="match status" value="1"/>
</dbReference>
<dbReference type="Pfam" id="PF19056">
    <property type="entry name" value="WD40_2"/>
    <property type="match status" value="1"/>
</dbReference>
<dbReference type="SMART" id="SM00325">
    <property type="entry name" value="RhoGEF"/>
    <property type="match status" value="1"/>
</dbReference>
<dbReference type="SUPFAM" id="SSF48065">
    <property type="entry name" value="DBL homology domain (DH-domain)"/>
    <property type="match status" value="1"/>
</dbReference>
<dbReference type="SUPFAM" id="SSF50729">
    <property type="entry name" value="PH domain-like"/>
    <property type="match status" value="1"/>
</dbReference>
<dbReference type="SUPFAM" id="SSF50978">
    <property type="entry name" value="WD40 repeat-like"/>
    <property type="match status" value="1"/>
</dbReference>
<dbReference type="PROSITE" id="PS50010">
    <property type="entry name" value="DH_2"/>
    <property type="match status" value="1"/>
</dbReference>
<keyword id="KW-0025">Alternative splicing</keyword>
<keyword id="KW-0175">Coiled coil</keyword>
<keyword id="KW-0344">Guanine-nucleotide releasing factor</keyword>
<keyword id="KW-0488">Methylation</keyword>
<keyword id="KW-0597">Phosphoprotein</keyword>
<keyword id="KW-1185">Reference proteome</keyword>
<sequence length="1345" mass="147946">MEQGEASPPVPAEHEAKCDTSNNEEEGELFDFDSGDEVPEADRQVPSADDRTRGAEAGGADENTCPAGNGTGAEPAPEAEPAKLVVPTKVNPYSVIDITPLQEDQPSSPDANTEEEGVGLRVPSGYSVPVPCGYAVPSNLPLLLPAYSSPVIIRAESVEEEEAAETVGDGQCNSLSSEDLPHSSEQGSQEGSALARWAADPANTAWMENPEEAIYDDVPRENSDSEPDEMIYDDVENGEEGGNSSPEYGWSSSEFESYEEPSDSEGKNGIPRSFLRSSHKKQLSHDLTRFKAHCEEKMRGLVASTVGAMEIQQAKQRQERKMQKLMKAAKEGTKDGLEKTKAAVKRGGSFIRTRSLVSQDHRCYFEEEQNLFIDVDCKHPEAVLTPMPEGLSQQQVVRRYILGSIVESEKNYVDALRRILEQYEKPLSEMEPRLLSDRKLRMVFYRVKEILQCHSMFQIALASRVSEWDVVETIGDVFVASFSKSMVLDAYSEYVNNFSTAVAVLKKTCATKPAFLEFLKLSQDSSPDRVTLHSLMMRPIQRFPQFILLLQDMLKNTAKGHPDRLPLQMALTELETLAEKLNERKRDADQRCEIKQIAKAINERYLNKLLSSGNRYLVRSDDVIETVYNDRGEIVKTKQRRIFMLNDVLMCATASSRNSHESHAVMSQRYLLKWSVPLGHVDVIQYNGGSGAGEHCRHHAAHSPESLAVVANAKPHKVYMGPGQLYQDLQNLLHDLNVVGQISQLIGNLRGSYQNLNQSVAHDWTSGLQRLILRKEDAIRAADRCRIQLQLPGKQDKSGRPTFFTAVFNTLTPAIKESWVSSLQMAKLALEEENHMGWFCVDDDGNLAKKETHPLLVGHMPVMVAKQPEFKIECAAYNPEPYLSNESQPASPSTARGFLWIGSCSNQMGQVAIVSFQGSNPKVIECFNVESRILCMVYIPAEESKPQETTETKDPEATASRAPHVPTICLGTEEGSISIYKSSQGCKKVRLQHFYAPDKSTVMSLACSPQGLYAGLVNGSVASYTKAPDGSWNSEPQQVIKLGVLPVRSLLLVEGALWAASGGQVFMASVETHTIENQLEAHQDEGMVISHMAVAGVGIWIAFTSGSTLRLFHTETLKHLQDVNIDAPVHSMLPGHQRLSVTSLLVCHGLLMVGTSLGVVVALPVPRLQGIPKVTGRGMVSYHAHNGPVKFIVSATAFQNKDRARDSPRSGSELQDEDPKDLLCSEEGPSCPGQPDTYTSVWLGDSLGLPTQKNDLSSSSGSLNLSHGSSSLEHRSVDSSLCDLLRDPSASPRSRPQGSRRARASSALVVCGGQGHRRVHRKARQPSQEDLVSSVMVWQIPLLGM</sequence>
<proteinExistence type="evidence at protein level"/>
<accession>Q8C033</accession>
<accession>Q5DU38</accession>
<accession>Q80VH8</accession>
<accession>Q8BW76</accession>
<accession>Q922S7</accession>
<organism>
    <name type="scientific">Mus musculus</name>
    <name type="common">Mouse</name>
    <dbReference type="NCBI Taxonomy" id="10090"/>
    <lineage>
        <taxon>Eukaryota</taxon>
        <taxon>Metazoa</taxon>
        <taxon>Chordata</taxon>
        <taxon>Craniata</taxon>
        <taxon>Vertebrata</taxon>
        <taxon>Euteleostomi</taxon>
        <taxon>Mammalia</taxon>
        <taxon>Eutheria</taxon>
        <taxon>Euarchontoglires</taxon>
        <taxon>Glires</taxon>
        <taxon>Rodentia</taxon>
        <taxon>Myomorpha</taxon>
        <taxon>Muroidea</taxon>
        <taxon>Muridae</taxon>
        <taxon>Murinae</taxon>
        <taxon>Mus</taxon>
        <taxon>Mus</taxon>
    </lineage>
</organism>
<evidence type="ECO:0000250" key="1">
    <source>
        <dbReference type="UniProtKB" id="O15013"/>
    </source>
</evidence>
<evidence type="ECO:0000255" key="2"/>
<evidence type="ECO:0000255" key="3">
    <source>
        <dbReference type="PROSITE-ProRule" id="PRU00062"/>
    </source>
</evidence>
<evidence type="ECO:0000256" key="4">
    <source>
        <dbReference type="SAM" id="MobiDB-lite"/>
    </source>
</evidence>
<evidence type="ECO:0000269" key="5">
    <source>
    </source>
</evidence>
<evidence type="ECO:0000303" key="6">
    <source>
    </source>
</evidence>
<evidence type="ECO:0000303" key="7">
    <source ref="2"/>
</evidence>
<evidence type="ECO:0000305" key="8"/>
<evidence type="ECO:0007744" key="9">
    <source>
    </source>
</evidence>
<feature type="chain" id="PRO_0000080927" description="Rho guanine nucleotide exchange factor 10">
    <location>
        <begin position="1"/>
        <end position="1345"/>
    </location>
</feature>
<feature type="domain" description="DH" evidence="3">
    <location>
        <begin position="397"/>
        <end position="584"/>
    </location>
</feature>
<feature type="region of interest" description="Disordered" evidence="4">
    <location>
        <begin position="1"/>
        <end position="84"/>
    </location>
</feature>
<feature type="region of interest" description="Disordered" evidence="4">
    <location>
        <begin position="99"/>
        <end position="120"/>
    </location>
</feature>
<feature type="region of interest" description="Disordered" evidence="4">
    <location>
        <begin position="158"/>
        <end position="195"/>
    </location>
</feature>
<feature type="region of interest" description="Disordered" evidence="4">
    <location>
        <begin position="207"/>
        <end position="273"/>
    </location>
</feature>
<feature type="region of interest" description="Disordered" evidence="4">
    <location>
        <begin position="1202"/>
        <end position="1237"/>
    </location>
</feature>
<feature type="region of interest" description="Disordered" evidence="4">
    <location>
        <begin position="1253"/>
        <end position="1306"/>
    </location>
</feature>
<feature type="coiled-coil region" evidence="2">
    <location>
        <begin position="307"/>
        <end position="335"/>
    </location>
</feature>
<feature type="compositionally biased region" description="Acidic residues" evidence="4">
    <location>
        <begin position="22"/>
        <end position="39"/>
    </location>
</feature>
<feature type="compositionally biased region" description="Basic and acidic residues" evidence="4">
    <location>
        <begin position="40"/>
        <end position="54"/>
    </location>
</feature>
<feature type="compositionally biased region" description="Polar residues" evidence="4">
    <location>
        <begin position="102"/>
        <end position="111"/>
    </location>
</feature>
<feature type="compositionally biased region" description="Polar residues" evidence="4">
    <location>
        <begin position="171"/>
        <end position="191"/>
    </location>
</feature>
<feature type="compositionally biased region" description="Acidic residues" evidence="4">
    <location>
        <begin position="224"/>
        <end position="239"/>
    </location>
</feature>
<feature type="compositionally biased region" description="Low complexity" evidence="4">
    <location>
        <begin position="242"/>
        <end position="255"/>
    </location>
</feature>
<feature type="compositionally biased region" description="Low complexity" evidence="4">
    <location>
        <begin position="1256"/>
        <end position="1271"/>
    </location>
</feature>
<feature type="modified residue" description="Phosphoserine" evidence="9">
    <location>
        <position position="157"/>
    </location>
</feature>
<feature type="modified residue" description="Phosphoserine" evidence="1">
    <location>
        <position position="355"/>
    </location>
</feature>
<feature type="modified residue" description="Phosphoserine" evidence="9">
    <location>
        <position position="1262"/>
    </location>
</feature>
<feature type="modified residue" description="N5-methylglutamine" evidence="1">
    <location>
        <position position="1314"/>
    </location>
</feature>
<feature type="splice variant" id="VSP_010707" description="In isoform 2." evidence="6 7">
    <location>
        <begin position="283"/>
        <end position="321"/>
    </location>
</feature>
<feature type="sequence conflict" description="In Ref. 1; BAC35629." evidence="8" ref="1">
    <location>
        <position position="184"/>
    </location>
</feature>
<feature type="sequence conflict" description="In Ref. 1; BAC27875." evidence="8" ref="1">
    <original>R</original>
    <variation>Q</variation>
    <location>
        <position position="196"/>
    </location>
</feature>
<feature type="sequence conflict" description="In Ref. 2; BAD90400." evidence="8" ref="2">
    <original>M</original>
    <variation>I</variation>
    <location>
        <position position="207"/>
    </location>
</feature>
<feature type="sequence conflict" description="In Ref. 2; BAD90400." evidence="8" ref="2">
    <original>G</original>
    <variation>R</variation>
    <location>
        <position position="348"/>
    </location>
</feature>
<feature type="sequence conflict" description="In Ref. 1; BAC27875." evidence="8" ref="1">
    <original>D</original>
    <variation>Y</variation>
    <location>
        <position position="528"/>
    </location>
</feature>
<feature type="sequence conflict" description="In Ref. 1; BAC35629." evidence="8" ref="1">
    <original>L</original>
    <variation>R</variation>
    <location>
        <position position="581"/>
    </location>
</feature>
<feature type="sequence conflict" description="In Ref. 3; AAH06842." evidence="8" ref="3">
    <original>V</original>
    <variation>F</variation>
    <location>
        <position position="1332"/>
    </location>
</feature>
<name>ARHGA_MOUSE</name>
<protein>
    <recommendedName>
        <fullName>Rho guanine nucleotide exchange factor 10</fullName>
    </recommendedName>
</protein>
<comment type="function">
    <text evidence="5">May play a role in developmental myelination of peripheral nerves.</text>
</comment>
<comment type="alternative products">
    <event type="alternative splicing"/>
    <isoform>
        <id>Q8C033-1</id>
        <name>1</name>
        <sequence type="displayed"/>
    </isoform>
    <isoform>
        <id>Q8C033-2</id>
        <name>2</name>
        <sequence type="described" ref="VSP_010707"/>
    </isoform>
    <text>Additional isoforms seem to exist.</text>
</comment>
<comment type="tissue specificity">
    <text evidence="5">Ubiquitously expressed.</text>
</comment>
<comment type="developmental stage">
    <text evidence="5">Found in the neuroepithelium of the meninges at 8.5 dpc, and in the roof plate of the rhombencephalon at 9.5 dpc. In 12.5 dpc embryos, it is ubiquitously expressed, with a pronounced expression in the neuroepithelium of brain vesicles, the neural tube, the ganglia and the neural layer of the retina.</text>
</comment>
<comment type="PTM">
    <text evidence="1">Methylated at Gln-1314 by N6AMT1.</text>
</comment>
<comment type="sequence caution" evidence="8">
    <conflict type="erroneous initiation">
        <sequence resource="EMBL-CDS" id="AAH59212"/>
    </conflict>
</comment>
<comment type="sequence caution" evidence="8">
    <conflict type="erroneous initiation">
        <sequence resource="EMBL-CDS" id="AAH66074"/>
    </conflict>
</comment>
<comment type="sequence caution" evidence="8">
    <conflict type="erroneous initiation">
        <sequence resource="EMBL-CDS" id="BAC27875"/>
    </conflict>
</comment>
<comment type="sequence caution" evidence="8">
    <conflict type="erroneous initiation">
        <sequence resource="EMBL-CDS" id="BAD90400"/>
    </conflict>
</comment>
<gene>
    <name type="primary">Arhgef10</name>
    <name type="synonym">Kiaa0294</name>
</gene>
<reference key="1">
    <citation type="journal article" date="2005" name="Science">
        <title>The transcriptional landscape of the mammalian genome.</title>
        <authorList>
            <person name="Carninci P."/>
            <person name="Kasukawa T."/>
            <person name="Katayama S."/>
            <person name="Gough J."/>
            <person name="Frith M.C."/>
            <person name="Maeda N."/>
            <person name="Oyama R."/>
            <person name="Ravasi T."/>
            <person name="Lenhard B."/>
            <person name="Wells C."/>
            <person name="Kodzius R."/>
            <person name="Shimokawa K."/>
            <person name="Bajic V.B."/>
            <person name="Brenner S.E."/>
            <person name="Batalov S."/>
            <person name="Forrest A.R."/>
            <person name="Zavolan M."/>
            <person name="Davis M.J."/>
            <person name="Wilming L.G."/>
            <person name="Aidinis V."/>
            <person name="Allen J.E."/>
            <person name="Ambesi-Impiombato A."/>
            <person name="Apweiler R."/>
            <person name="Aturaliya R.N."/>
            <person name="Bailey T.L."/>
            <person name="Bansal M."/>
            <person name="Baxter L."/>
            <person name="Beisel K.W."/>
            <person name="Bersano T."/>
            <person name="Bono H."/>
            <person name="Chalk A.M."/>
            <person name="Chiu K.P."/>
            <person name="Choudhary V."/>
            <person name="Christoffels A."/>
            <person name="Clutterbuck D.R."/>
            <person name="Crowe M.L."/>
            <person name="Dalla E."/>
            <person name="Dalrymple B.P."/>
            <person name="de Bono B."/>
            <person name="Della Gatta G."/>
            <person name="di Bernardo D."/>
            <person name="Down T."/>
            <person name="Engstrom P."/>
            <person name="Fagiolini M."/>
            <person name="Faulkner G."/>
            <person name="Fletcher C.F."/>
            <person name="Fukushima T."/>
            <person name="Furuno M."/>
            <person name="Futaki S."/>
            <person name="Gariboldi M."/>
            <person name="Georgii-Hemming P."/>
            <person name="Gingeras T.R."/>
            <person name="Gojobori T."/>
            <person name="Green R.E."/>
            <person name="Gustincich S."/>
            <person name="Harbers M."/>
            <person name="Hayashi Y."/>
            <person name="Hensch T.K."/>
            <person name="Hirokawa N."/>
            <person name="Hill D."/>
            <person name="Huminiecki L."/>
            <person name="Iacono M."/>
            <person name="Ikeo K."/>
            <person name="Iwama A."/>
            <person name="Ishikawa T."/>
            <person name="Jakt M."/>
            <person name="Kanapin A."/>
            <person name="Katoh M."/>
            <person name="Kawasawa Y."/>
            <person name="Kelso J."/>
            <person name="Kitamura H."/>
            <person name="Kitano H."/>
            <person name="Kollias G."/>
            <person name="Krishnan S.P."/>
            <person name="Kruger A."/>
            <person name="Kummerfeld S.K."/>
            <person name="Kurochkin I.V."/>
            <person name="Lareau L.F."/>
            <person name="Lazarevic D."/>
            <person name="Lipovich L."/>
            <person name="Liu J."/>
            <person name="Liuni S."/>
            <person name="McWilliam S."/>
            <person name="Madan Babu M."/>
            <person name="Madera M."/>
            <person name="Marchionni L."/>
            <person name="Matsuda H."/>
            <person name="Matsuzawa S."/>
            <person name="Miki H."/>
            <person name="Mignone F."/>
            <person name="Miyake S."/>
            <person name="Morris K."/>
            <person name="Mottagui-Tabar S."/>
            <person name="Mulder N."/>
            <person name="Nakano N."/>
            <person name="Nakauchi H."/>
            <person name="Ng P."/>
            <person name="Nilsson R."/>
            <person name="Nishiguchi S."/>
            <person name="Nishikawa S."/>
            <person name="Nori F."/>
            <person name="Ohara O."/>
            <person name="Okazaki Y."/>
            <person name="Orlando V."/>
            <person name="Pang K.C."/>
            <person name="Pavan W.J."/>
            <person name="Pavesi G."/>
            <person name="Pesole G."/>
            <person name="Petrovsky N."/>
            <person name="Piazza S."/>
            <person name="Reed J."/>
            <person name="Reid J.F."/>
            <person name="Ring B.Z."/>
            <person name="Ringwald M."/>
            <person name="Rost B."/>
            <person name="Ruan Y."/>
            <person name="Salzberg S.L."/>
            <person name="Sandelin A."/>
            <person name="Schneider C."/>
            <person name="Schoenbach C."/>
            <person name="Sekiguchi K."/>
            <person name="Semple C.A."/>
            <person name="Seno S."/>
            <person name="Sessa L."/>
            <person name="Sheng Y."/>
            <person name="Shibata Y."/>
            <person name="Shimada H."/>
            <person name="Shimada K."/>
            <person name="Silva D."/>
            <person name="Sinclair B."/>
            <person name="Sperling S."/>
            <person name="Stupka E."/>
            <person name="Sugiura K."/>
            <person name="Sultana R."/>
            <person name="Takenaka Y."/>
            <person name="Taki K."/>
            <person name="Tammoja K."/>
            <person name="Tan S.L."/>
            <person name="Tang S."/>
            <person name="Taylor M.S."/>
            <person name="Tegner J."/>
            <person name="Teichmann S.A."/>
            <person name="Ueda H.R."/>
            <person name="van Nimwegen E."/>
            <person name="Verardo R."/>
            <person name="Wei C.L."/>
            <person name="Yagi K."/>
            <person name="Yamanishi H."/>
            <person name="Zabarovsky E."/>
            <person name="Zhu S."/>
            <person name="Zimmer A."/>
            <person name="Hide W."/>
            <person name="Bult C."/>
            <person name="Grimmond S.M."/>
            <person name="Teasdale R.D."/>
            <person name="Liu E.T."/>
            <person name="Brusic V."/>
            <person name="Quackenbush J."/>
            <person name="Wahlestedt C."/>
            <person name="Mattick J.S."/>
            <person name="Hume D.A."/>
            <person name="Kai C."/>
            <person name="Sasaki D."/>
            <person name="Tomaru Y."/>
            <person name="Fukuda S."/>
            <person name="Kanamori-Katayama M."/>
            <person name="Suzuki M."/>
            <person name="Aoki J."/>
            <person name="Arakawa T."/>
            <person name="Iida J."/>
            <person name="Imamura K."/>
            <person name="Itoh M."/>
            <person name="Kato T."/>
            <person name="Kawaji H."/>
            <person name="Kawagashira N."/>
            <person name="Kawashima T."/>
            <person name="Kojima M."/>
            <person name="Kondo S."/>
            <person name="Konno H."/>
            <person name="Nakano K."/>
            <person name="Ninomiya N."/>
            <person name="Nishio T."/>
            <person name="Okada M."/>
            <person name="Plessy C."/>
            <person name="Shibata K."/>
            <person name="Shiraki T."/>
            <person name="Suzuki S."/>
            <person name="Tagami M."/>
            <person name="Waki K."/>
            <person name="Watahiki A."/>
            <person name="Okamura-Oho Y."/>
            <person name="Suzuki H."/>
            <person name="Kawai J."/>
            <person name="Hayashizaki Y."/>
        </authorList>
    </citation>
    <scope>NUCLEOTIDE SEQUENCE [LARGE SCALE MRNA] (ISOFORM 1)</scope>
    <source>
        <strain>C57BL/6J</strain>
        <tissue>Olfactory bulb</tissue>
        <tissue>Oviduct</tissue>
    </source>
</reference>
<reference key="2">
    <citation type="submission" date="2005-02" db="EMBL/GenBank/DDBJ databases">
        <title>Prediction of the coding sequences of mouse homologues of KIAA gene. The complete nucleotide sequences of mouse KIAA-homologous cDNAs identified by screening of terminal sequences of cDNA clones randomly sampled from size-fractionated libraries.</title>
        <authorList>
            <person name="Okazaki N."/>
            <person name="Kikuno R.F."/>
            <person name="Ohara R."/>
            <person name="Inamoto S."/>
            <person name="Nagase T."/>
            <person name="Ohara O."/>
            <person name="Koga H."/>
        </authorList>
    </citation>
    <scope>NUCLEOTIDE SEQUENCE [LARGE SCALE MRNA] (ISOFORM 2)</scope>
    <source>
        <tissue>Fetal brain</tissue>
    </source>
</reference>
<reference key="3">
    <citation type="journal article" date="2004" name="Genome Res.">
        <title>The status, quality, and expansion of the NIH full-length cDNA project: the Mammalian Gene Collection (MGC).</title>
        <authorList>
            <consortium name="The MGC Project Team"/>
        </authorList>
    </citation>
    <scope>NUCLEOTIDE SEQUENCE [LARGE SCALE MRNA] (ISOFORM 2)</scope>
    <source>
        <strain>C57BL/6J</strain>
        <strain>FVB/N</strain>
        <tissue>Brain</tissue>
        <tissue>Mammary tumor</tissue>
    </source>
</reference>
<reference key="4">
    <citation type="journal article" date="2003" name="Am. J. Hum. Genet.">
        <title>Slowed conduction and thin myelination of peripheral nerves associated with mutant rho Guanine-nucleotide exchange factor 10.</title>
        <authorList>
            <person name="Verhoeven K."/>
            <person name="De Jonghe P."/>
            <person name="Van de Putte T."/>
            <person name="Nelis E."/>
            <person name="Zwijsen A."/>
            <person name="Verpoorten N."/>
            <person name="De Vriendt E."/>
            <person name="Jacobs A."/>
            <person name="Van Gerwen V."/>
            <person name="Francis A."/>
            <person name="Ceuterick C."/>
            <person name="Huylebroeck D."/>
            <person name="Timmerman V."/>
        </authorList>
    </citation>
    <scope>FUNCTION</scope>
    <scope>TISSUE SPECIFICITY</scope>
    <scope>DEVELOPMENTAL STAGE</scope>
    <scope>ALTERNATIVE SPLICING</scope>
</reference>
<reference key="5">
    <citation type="journal article" date="2010" name="Cell">
        <title>A tissue-specific atlas of mouse protein phosphorylation and expression.</title>
        <authorList>
            <person name="Huttlin E.L."/>
            <person name="Jedrychowski M.P."/>
            <person name="Elias J.E."/>
            <person name="Goswami T."/>
            <person name="Rad R."/>
            <person name="Beausoleil S.A."/>
            <person name="Villen J."/>
            <person name="Haas W."/>
            <person name="Sowa M.E."/>
            <person name="Gygi S.P."/>
        </authorList>
    </citation>
    <scope>PHOSPHORYLATION [LARGE SCALE ANALYSIS] AT SER-157 AND SER-1262</scope>
    <scope>IDENTIFICATION BY MASS SPECTROMETRY [LARGE SCALE ANALYSIS]</scope>
    <source>
        <tissue>Brain</tissue>
        <tissue>Kidney</tissue>
        <tissue>Lung</tissue>
        <tissue>Pancreas</tissue>
        <tissue>Testis</tissue>
    </source>
</reference>